<protein>
    <recommendedName>
        <fullName evidence="6">Competence protein ComGE</fullName>
    </recommendedName>
    <alternativeName>
        <fullName evidence="5">Minor pilin ComGE</fullName>
    </alternativeName>
</protein>
<feature type="chain" id="PRO_0000459707" description="Competence protein ComGE">
    <location>
        <begin position="1"/>
        <end position="100"/>
    </location>
</feature>
<feature type="transmembrane region" description="Helical" evidence="3">
    <location>
        <begin position="15"/>
        <end position="35"/>
    </location>
</feature>
<feature type="mutagenesis site" description="Pilus formation nearly abolished. Significantly reduces transformation." evidence="4">
    <original>E</original>
    <variation>A</variation>
    <location>
        <position position="19"/>
    </location>
</feature>
<reference evidence="7" key="1">
    <citation type="journal article" date="2001" name="J. Bacteriol.">
        <title>Genome of the bacterium Streptococcus pneumoniae strain R6.</title>
        <authorList>
            <person name="Hoskins J."/>
            <person name="Alborn W.E. Jr."/>
            <person name="Arnold J."/>
            <person name="Blaszczak L.C."/>
            <person name="Burgett S."/>
            <person name="DeHoff B.S."/>
            <person name="Estrem S.T."/>
            <person name="Fritz L."/>
            <person name="Fu D.-J."/>
            <person name="Fuller W."/>
            <person name="Geringer C."/>
            <person name="Gilmour R."/>
            <person name="Glass J.S."/>
            <person name="Khoja H."/>
            <person name="Kraft A.R."/>
            <person name="Lagace R.E."/>
            <person name="LeBlanc D.J."/>
            <person name="Lee L.N."/>
            <person name="Lefkowitz E.J."/>
            <person name="Lu J."/>
            <person name="Matsushima P."/>
            <person name="McAhren S.M."/>
            <person name="McHenney M."/>
            <person name="McLeaster K."/>
            <person name="Mundy C.W."/>
            <person name="Nicas T.I."/>
            <person name="Norris F.H."/>
            <person name="O'Gara M."/>
            <person name="Peery R.B."/>
            <person name="Robertson G.T."/>
            <person name="Rockey P."/>
            <person name="Sun P.-M."/>
            <person name="Winkler M.E."/>
            <person name="Yang Y."/>
            <person name="Young-Bellido M."/>
            <person name="Zhao G."/>
            <person name="Zook C.A."/>
            <person name="Baltz R.H."/>
            <person name="Jaskunas S.R."/>
            <person name="Rosteck P.R. Jr."/>
            <person name="Skatrud P.L."/>
            <person name="Glass J.I."/>
        </authorList>
    </citation>
    <scope>NUCLEOTIDE SEQUENCE [LARGE SCALE GENOMIC DNA]</scope>
    <source>
        <strain evidence="7">ATCC BAA-255 / R6</strain>
    </source>
</reference>
<reference evidence="6" key="2">
    <citation type="journal article" date="2021" name="Front. Cell. Infect. Microbiol.">
        <title>The Role of Minor Pilins in Assembly and Function of the Competence Pilus of Streptococcus pneumoniae.</title>
        <authorList>
            <person name="Oliveira V."/>
            <person name="Aschtgen M.S."/>
            <person name="van Erp A."/>
            <person name="Henriques-Normark B."/>
            <person name="Muschiol S."/>
        </authorList>
    </citation>
    <scope>FUNCTION</scope>
    <scope>INTERACTION WITH COMGD; COMGF AND COMGG</scope>
    <scope>MUTAGENESIS OF GLU-19</scope>
</reference>
<evidence type="ECO:0000250" key="1">
    <source>
        <dbReference type="UniProtKB" id="P25956"/>
    </source>
</evidence>
<evidence type="ECO:0000250" key="2">
    <source>
        <dbReference type="UniProtKB" id="P25957"/>
    </source>
</evidence>
<evidence type="ECO:0000255" key="3"/>
<evidence type="ECO:0000269" key="4">
    <source>
    </source>
</evidence>
<evidence type="ECO:0000303" key="5">
    <source>
    </source>
</evidence>
<evidence type="ECO:0000305" key="6"/>
<evidence type="ECO:0000305" key="7">
    <source>
    </source>
</evidence>
<keyword id="KW-1003">Cell membrane</keyword>
<keyword id="KW-0472">Membrane</keyword>
<keyword id="KW-1185">Reference proteome</keyword>
<keyword id="KW-0812">Transmembrane</keyword>
<keyword id="KW-1133">Transmembrane helix</keyword>
<proteinExistence type="evidence at protein level"/>
<sequence>MEKLNALRKQKIRAVILLEAVVALAIFASIATLLLGQIQKNRQEEAKILQKEEVLRVAKMALQTGQNQVSINGVEIQVFSSEKGLEVYHGSEQLLAIKEP</sequence>
<comment type="function">
    <text evidence="1 4 6">Required for formation of the type IV-like pilus (T4P) that plays a role in transformation (PubMed:35004361). Transformation pili are dynamically extended and retracted, perhaps thereby promoting DNA uptake and transformation (Probable). Involved in transformation (PubMed:35004361). Required for DNA binding (By similarity).</text>
</comment>
<comment type="subunit">
    <text evidence="4">The transformation pili are flexible filaments, consisting mainly of the major pilin ComGC and smaller amounts of the minor pilins, including at least ComGD, ComGF and ComGG, and perhaps ComGE (PubMed:35004361). Interacts with ComGD (PubMed:35004361). Interacts with ComGF (PubMed:35004361). Interacts with ComGG (PubMed:35004361).</text>
</comment>
<comment type="subcellular location">
    <subcellularLocation>
        <location evidence="2">Cell membrane</location>
        <topology evidence="2">Single-pass membrane protein</topology>
    </subcellularLocation>
    <subcellularLocation>
        <location evidence="2">Cell surface</location>
    </subcellularLocation>
    <text evidence="2">The unprocessed form is an integral membrane protein. Upon cleavage, it is translocated to the outer face of the membrane.</text>
</comment>
<comment type="induction">
    <text evidence="4">Part of the putative comGA-comGB-comGC-comGD-comGE-comGF-comGG operon.</text>
</comment>
<name>COMGE_STRR6</name>
<accession>C0HMA8</accession>
<dbReference type="EMBL" id="AE007317">
    <property type="status" value="NOT_ANNOTATED_CDS"/>
    <property type="molecule type" value="Genomic_DNA"/>
</dbReference>
<dbReference type="SMR" id="C0HMA8"/>
<dbReference type="Proteomes" id="UP000000586">
    <property type="component" value="Chromosome"/>
</dbReference>
<dbReference type="GO" id="GO:0009986">
    <property type="term" value="C:cell surface"/>
    <property type="evidence" value="ECO:0007669"/>
    <property type="project" value="UniProtKB-SubCell"/>
</dbReference>
<dbReference type="GO" id="GO:0005886">
    <property type="term" value="C:plasma membrane"/>
    <property type="evidence" value="ECO:0007669"/>
    <property type="project" value="UniProtKB-SubCell"/>
</dbReference>
<dbReference type="InterPro" id="IPR021749">
    <property type="entry name" value="ComGE"/>
</dbReference>
<dbReference type="InterPro" id="IPR053468">
    <property type="entry name" value="T4P_transformation_protein"/>
</dbReference>
<dbReference type="NCBIfam" id="NF041013">
    <property type="entry name" value="T4P_ComGE"/>
    <property type="match status" value="1"/>
</dbReference>
<dbReference type="Pfam" id="PF11773">
    <property type="entry name" value="ComGE"/>
    <property type="match status" value="1"/>
</dbReference>
<organism evidence="6">
    <name type="scientific">Streptococcus pneumoniae (strain ATCC BAA-255 / R6)</name>
    <dbReference type="NCBI Taxonomy" id="171101"/>
    <lineage>
        <taxon>Bacteria</taxon>
        <taxon>Bacillati</taxon>
        <taxon>Bacillota</taxon>
        <taxon>Bacilli</taxon>
        <taxon>Lactobacillales</taxon>
        <taxon>Streptococcaceae</taxon>
        <taxon>Streptococcus</taxon>
    </lineage>
</organism>
<gene>
    <name evidence="5" type="primary">comGE</name>
    <name evidence="6" type="ordered locus">spr1860</name>
</gene>